<accession>O14224</accession>
<name>GDIR_SCHPO</name>
<evidence type="ECO:0000250" key="1"/>
<evidence type="ECO:0000256" key="2">
    <source>
        <dbReference type="SAM" id="MobiDB-lite"/>
    </source>
</evidence>
<evidence type="ECO:0000269" key="3">
    <source>
    </source>
</evidence>
<evidence type="ECO:0000269" key="4">
    <source>
    </source>
</evidence>
<evidence type="ECO:0000305" key="5"/>
<gene>
    <name type="ORF">SPAC6F12.06</name>
</gene>
<feature type="chain" id="PRO_0000318108" description="Rho GDP-dissociation inhibitor">
    <location>
        <begin position="1"/>
        <end position="205"/>
    </location>
</feature>
<feature type="region of interest" description="Disordered" evidence="2">
    <location>
        <begin position="1"/>
        <end position="31"/>
    </location>
</feature>
<feature type="compositionally biased region" description="Polar residues" evidence="2">
    <location>
        <begin position="1"/>
        <end position="11"/>
    </location>
</feature>
<feature type="modified residue" description="Phosphoserine" evidence="4">
    <location>
        <position position="63"/>
    </location>
</feature>
<protein>
    <recommendedName>
        <fullName>Rho GDP-dissociation inhibitor</fullName>
        <shortName>Rho GDI</shortName>
    </recommendedName>
</protein>
<keyword id="KW-0963">Cytoplasm</keyword>
<keyword id="KW-0539">Nucleus</keyword>
<keyword id="KW-0597">Phosphoprotein</keyword>
<keyword id="KW-1185">Reference proteome</keyword>
<proteinExistence type="evidence at protein level"/>
<sequence length="205" mass="23032">MSVNNEVSADQHNPELEDDTFEHGPPVSLGEKKSLNEYMKMDAEDESLQKWKASLGITGTGYSPSNDRRTVVILKLSLLVDGRDPVDVNMEDAASVEQIRKKGFTIKEGSEFKIGVKFRVQHEVISGLRYVQTVRRRGFVVDKTSTMIGSYGPSETPYDFTSEPDEAPTGMLARGHYEANGKFVDDDKVVHHEFVWAFDVAKSWK</sequence>
<comment type="function">
    <text evidence="1">Regulates the GDP/GTP exchange reaction of the Rho proteins by inhibiting the dissociation of GDP from them, and the subsequent binding of GTP to them.</text>
</comment>
<comment type="subcellular location">
    <subcellularLocation>
        <location evidence="3">Cytoplasm</location>
    </subcellularLocation>
    <subcellularLocation>
        <location evidence="3">Nucleus</location>
    </subcellularLocation>
</comment>
<comment type="similarity">
    <text evidence="5">Belongs to the Rho GDI family.</text>
</comment>
<dbReference type="EMBL" id="CU329670">
    <property type="protein sequence ID" value="CAB11090.1"/>
    <property type="molecule type" value="Genomic_DNA"/>
</dbReference>
<dbReference type="PIR" id="T11657">
    <property type="entry name" value="T11657"/>
</dbReference>
<dbReference type="SMR" id="O14224"/>
<dbReference type="BioGRID" id="279643">
    <property type="interactions" value="11"/>
</dbReference>
<dbReference type="FunCoup" id="O14224">
    <property type="interactions" value="153"/>
</dbReference>
<dbReference type="STRING" id="284812.O14224"/>
<dbReference type="iPTMnet" id="O14224"/>
<dbReference type="PaxDb" id="4896-SPAC6F12.06.1"/>
<dbReference type="EnsemblFungi" id="SPAC6F12.06.1">
    <property type="protein sequence ID" value="SPAC6F12.06.1:pep"/>
    <property type="gene ID" value="SPAC6F12.06"/>
</dbReference>
<dbReference type="KEGG" id="spo:2543214"/>
<dbReference type="PomBase" id="SPAC6F12.06"/>
<dbReference type="VEuPathDB" id="FungiDB:SPAC6F12.06"/>
<dbReference type="eggNOG" id="KOG3205">
    <property type="taxonomic scope" value="Eukaryota"/>
</dbReference>
<dbReference type="HOGENOM" id="CLU_076228_1_0_1"/>
<dbReference type="InParanoid" id="O14224"/>
<dbReference type="OMA" id="YKPTAAK"/>
<dbReference type="PhylomeDB" id="O14224"/>
<dbReference type="Reactome" id="R-SPO-8980692">
    <property type="pathway name" value="RHOA GTPase cycle"/>
</dbReference>
<dbReference type="Reactome" id="R-SPO-9013026">
    <property type="pathway name" value="RHOB GTPase cycle"/>
</dbReference>
<dbReference type="Reactome" id="R-SPO-9013106">
    <property type="pathway name" value="RHOC GTPase cycle"/>
</dbReference>
<dbReference type="Reactome" id="R-SPO-9013148">
    <property type="pathway name" value="CDC42 GTPase cycle"/>
</dbReference>
<dbReference type="PRO" id="PR:O14224"/>
<dbReference type="Proteomes" id="UP000002485">
    <property type="component" value="Chromosome I"/>
</dbReference>
<dbReference type="GO" id="GO:0005829">
    <property type="term" value="C:cytosol"/>
    <property type="evidence" value="ECO:0007005"/>
    <property type="project" value="PomBase"/>
</dbReference>
<dbReference type="GO" id="GO:0016020">
    <property type="term" value="C:membrane"/>
    <property type="evidence" value="ECO:0000318"/>
    <property type="project" value="GO_Central"/>
</dbReference>
<dbReference type="GO" id="GO:0005634">
    <property type="term" value="C:nucleus"/>
    <property type="evidence" value="ECO:0007005"/>
    <property type="project" value="PomBase"/>
</dbReference>
<dbReference type="GO" id="GO:0005094">
    <property type="term" value="F:Rho GDP-dissociation inhibitor activity"/>
    <property type="evidence" value="ECO:0000318"/>
    <property type="project" value="GO_Central"/>
</dbReference>
<dbReference type="GO" id="GO:0030036">
    <property type="term" value="P:actin cytoskeleton organization"/>
    <property type="evidence" value="ECO:0000266"/>
    <property type="project" value="PomBase"/>
</dbReference>
<dbReference type="GO" id="GO:0007266">
    <property type="term" value="P:Rho protein signal transduction"/>
    <property type="evidence" value="ECO:0000318"/>
    <property type="project" value="GO_Central"/>
</dbReference>
<dbReference type="FunFam" id="2.70.50.30:FF:000001">
    <property type="entry name" value="Rho GDP-dissociation inhibitor 1"/>
    <property type="match status" value="1"/>
</dbReference>
<dbReference type="Gene3D" id="2.70.50.30">
    <property type="entry name" value="Coagulation Factor XIII, subunit A, domain 1"/>
    <property type="match status" value="1"/>
</dbReference>
<dbReference type="InterPro" id="IPR014756">
    <property type="entry name" value="Ig_E-set"/>
</dbReference>
<dbReference type="InterPro" id="IPR000406">
    <property type="entry name" value="Rho_GDI"/>
</dbReference>
<dbReference type="InterPro" id="IPR024792">
    <property type="entry name" value="RhoGDI_dom_sf"/>
</dbReference>
<dbReference type="PANTHER" id="PTHR10980:SF3">
    <property type="entry name" value="LD16419P"/>
    <property type="match status" value="1"/>
</dbReference>
<dbReference type="PANTHER" id="PTHR10980">
    <property type="entry name" value="RHO GDP-DISSOCIATION INHIBITOR"/>
    <property type="match status" value="1"/>
</dbReference>
<dbReference type="Pfam" id="PF02115">
    <property type="entry name" value="Rho_GDI"/>
    <property type="match status" value="1"/>
</dbReference>
<dbReference type="PRINTS" id="PR00492">
    <property type="entry name" value="RHOGDI"/>
</dbReference>
<dbReference type="SUPFAM" id="SSF81296">
    <property type="entry name" value="E set domains"/>
    <property type="match status" value="1"/>
</dbReference>
<organism>
    <name type="scientific">Schizosaccharomyces pombe (strain 972 / ATCC 24843)</name>
    <name type="common">Fission yeast</name>
    <dbReference type="NCBI Taxonomy" id="284812"/>
    <lineage>
        <taxon>Eukaryota</taxon>
        <taxon>Fungi</taxon>
        <taxon>Dikarya</taxon>
        <taxon>Ascomycota</taxon>
        <taxon>Taphrinomycotina</taxon>
        <taxon>Schizosaccharomycetes</taxon>
        <taxon>Schizosaccharomycetales</taxon>
        <taxon>Schizosaccharomycetaceae</taxon>
        <taxon>Schizosaccharomyces</taxon>
    </lineage>
</organism>
<reference key="1">
    <citation type="journal article" date="2002" name="Nature">
        <title>The genome sequence of Schizosaccharomyces pombe.</title>
        <authorList>
            <person name="Wood V."/>
            <person name="Gwilliam R."/>
            <person name="Rajandream M.A."/>
            <person name="Lyne M.H."/>
            <person name="Lyne R."/>
            <person name="Stewart A."/>
            <person name="Sgouros J.G."/>
            <person name="Peat N."/>
            <person name="Hayles J."/>
            <person name="Baker S.G."/>
            <person name="Basham D."/>
            <person name="Bowman S."/>
            <person name="Brooks K."/>
            <person name="Brown D."/>
            <person name="Brown S."/>
            <person name="Chillingworth T."/>
            <person name="Churcher C.M."/>
            <person name="Collins M."/>
            <person name="Connor R."/>
            <person name="Cronin A."/>
            <person name="Davis P."/>
            <person name="Feltwell T."/>
            <person name="Fraser A."/>
            <person name="Gentles S."/>
            <person name="Goble A."/>
            <person name="Hamlin N."/>
            <person name="Harris D.E."/>
            <person name="Hidalgo J."/>
            <person name="Hodgson G."/>
            <person name="Holroyd S."/>
            <person name="Hornsby T."/>
            <person name="Howarth S."/>
            <person name="Huckle E.J."/>
            <person name="Hunt S."/>
            <person name="Jagels K."/>
            <person name="James K.D."/>
            <person name="Jones L."/>
            <person name="Jones M."/>
            <person name="Leather S."/>
            <person name="McDonald S."/>
            <person name="McLean J."/>
            <person name="Mooney P."/>
            <person name="Moule S."/>
            <person name="Mungall K.L."/>
            <person name="Murphy L.D."/>
            <person name="Niblett D."/>
            <person name="Odell C."/>
            <person name="Oliver K."/>
            <person name="O'Neil S."/>
            <person name="Pearson D."/>
            <person name="Quail M.A."/>
            <person name="Rabbinowitsch E."/>
            <person name="Rutherford K.M."/>
            <person name="Rutter S."/>
            <person name="Saunders D."/>
            <person name="Seeger K."/>
            <person name="Sharp S."/>
            <person name="Skelton J."/>
            <person name="Simmonds M.N."/>
            <person name="Squares R."/>
            <person name="Squares S."/>
            <person name="Stevens K."/>
            <person name="Taylor K."/>
            <person name="Taylor R.G."/>
            <person name="Tivey A."/>
            <person name="Walsh S.V."/>
            <person name="Warren T."/>
            <person name="Whitehead S."/>
            <person name="Woodward J.R."/>
            <person name="Volckaert G."/>
            <person name="Aert R."/>
            <person name="Robben J."/>
            <person name="Grymonprez B."/>
            <person name="Weltjens I."/>
            <person name="Vanstreels E."/>
            <person name="Rieger M."/>
            <person name="Schaefer M."/>
            <person name="Mueller-Auer S."/>
            <person name="Gabel C."/>
            <person name="Fuchs M."/>
            <person name="Duesterhoeft A."/>
            <person name="Fritzc C."/>
            <person name="Holzer E."/>
            <person name="Moestl D."/>
            <person name="Hilbert H."/>
            <person name="Borzym K."/>
            <person name="Langer I."/>
            <person name="Beck A."/>
            <person name="Lehrach H."/>
            <person name="Reinhardt R."/>
            <person name="Pohl T.M."/>
            <person name="Eger P."/>
            <person name="Zimmermann W."/>
            <person name="Wedler H."/>
            <person name="Wambutt R."/>
            <person name="Purnelle B."/>
            <person name="Goffeau A."/>
            <person name="Cadieu E."/>
            <person name="Dreano S."/>
            <person name="Gloux S."/>
            <person name="Lelaure V."/>
            <person name="Mottier S."/>
            <person name="Galibert F."/>
            <person name="Aves S.J."/>
            <person name="Xiang Z."/>
            <person name="Hunt C."/>
            <person name="Moore K."/>
            <person name="Hurst S.M."/>
            <person name="Lucas M."/>
            <person name="Rochet M."/>
            <person name="Gaillardin C."/>
            <person name="Tallada V.A."/>
            <person name="Garzon A."/>
            <person name="Thode G."/>
            <person name="Daga R.R."/>
            <person name="Cruzado L."/>
            <person name="Jimenez J."/>
            <person name="Sanchez M."/>
            <person name="del Rey F."/>
            <person name="Benito J."/>
            <person name="Dominguez A."/>
            <person name="Revuelta J.L."/>
            <person name="Moreno S."/>
            <person name="Armstrong J."/>
            <person name="Forsburg S.L."/>
            <person name="Cerutti L."/>
            <person name="Lowe T."/>
            <person name="McCombie W.R."/>
            <person name="Paulsen I."/>
            <person name="Potashkin J."/>
            <person name="Shpakovski G.V."/>
            <person name="Ussery D."/>
            <person name="Barrell B.G."/>
            <person name="Nurse P."/>
        </authorList>
    </citation>
    <scope>NUCLEOTIDE SEQUENCE [LARGE SCALE GENOMIC DNA]</scope>
    <source>
        <strain>972 / ATCC 24843</strain>
    </source>
</reference>
<reference key="2">
    <citation type="journal article" date="2006" name="Nat. Biotechnol.">
        <title>ORFeome cloning and global analysis of protein localization in the fission yeast Schizosaccharomyces pombe.</title>
        <authorList>
            <person name="Matsuyama A."/>
            <person name="Arai R."/>
            <person name="Yashiroda Y."/>
            <person name="Shirai A."/>
            <person name="Kamata A."/>
            <person name="Sekido S."/>
            <person name="Kobayashi Y."/>
            <person name="Hashimoto A."/>
            <person name="Hamamoto M."/>
            <person name="Hiraoka Y."/>
            <person name="Horinouchi S."/>
            <person name="Yoshida M."/>
        </authorList>
    </citation>
    <scope>SUBCELLULAR LOCATION [LARGE SCALE ANALYSIS]</scope>
</reference>
<reference key="3">
    <citation type="journal article" date="2008" name="J. Proteome Res.">
        <title>Phosphoproteome analysis of fission yeast.</title>
        <authorList>
            <person name="Wilson-Grady J.T."/>
            <person name="Villen J."/>
            <person name="Gygi S.P."/>
        </authorList>
    </citation>
    <scope>PHOSPHORYLATION [LARGE SCALE ANALYSIS] AT SER-63</scope>
    <scope>IDENTIFICATION BY MASS SPECTROMETRY</scope>
</reference>